<evidence type="ECO:0000255" key="1">
    <source>
        <dbReference type="HAMAP-Rule" id="MF_00658"/>
    </source>
</evidence>
<reference key="1">
    <citation type="journal article" date="2009" name="Stand. Genomic Sci.">
        <title>Complete genome sequence of Methanocorpusculum labreanum type strain Z.</title>
        <authorList>
            <person name="Anderson I.J."/>
            <person name="Sieprawska-Lupa M."/>
            <person name="Goltsman E."/>
            <person name="Lapidus A."/>
            <person name="Copeland A."/>
            <person name="Glavina Del Rio T."/>
            <person name="Tice H."/>
            <person name="Dalin E."/>
            <person name="Barry K."/>
            <person name="Pitluck S."/>
            <person name="Hauser L."/>
            <person name="Land M."/>
            <person name="Lucas S."/>
            <person name="Richardson P."/>
            <person name="Whitman W.B."/>
            <person name="Kyrpides N.C."/>
        </authorList>
    </citation>
    <scope>NUCLEOTIDE SEQUENCE [LARGE SCALE GENOMIC DNA]</scope>
    <source>
        <strain>ATCC 43576 / DSM 4855 / Z</strain>
    </source>
</reference>
<protein>
    <recommendedName>
        <fullName evidence="1">Putative ribosomal RNA large subunit methyltransferase H</fullName>
        <ecNumber evidence="1">2.1.1.177</ecNumber>
    </recommendedName>
    <alternativeName>
        <fullName evidence="1">23S rRNA (pseudouridine1915-N3)-methyltransferase</fullName>
    </alternativeName>
    <alternativeName>
        <fullName evidence="1">rRNA (pseudouridine-N3-)-methyltransferase RlmH</fullName>
    </alternativeName>
</protein>
<accession>A2SR93</accession>
<keyword id="KW-0963">Cytoplasm</keyword>
<keyword id="KW-0489">Methyltransferase</keyword>
<keyword id="KW-1185">Reference proteome</keyword>
<keyword id="KW-0698">rRNA processing</keyword>
<keyword id="KW-0949">S-adenosyl-L-methionine</keyword>
<keyword id="KW-0808">Transferase</keyword>
<comment type="function">
    <text evidence="1">Specifically methylates the pseudouridine at position 1915 (m3Psi1915) in 23S rRNA.</text>
</comment>
<comment type="catalytic activity">
    <reaction evidence="1">
        <text>pseudouridine(1915) in 23S rRNA + S-adenosyl-L-methionine = N(3)-methylpseudouridine(1915) in 23S rRNA + S-adenosyl-L-homocysteine + H(+)</text>
        <dbReference type="Rhea" id="RHEA:42752"/>
        <dbReference type="Rhea" id="RHEA-COMP:10221"/>
        <dbReference type="Rhea" id="RHEA-COMP:10222"/>
        <dbReference type="ChEBI" id="CHEBI:15378"/>
        <dbReference type="ChEBI" id="CHEBI:57856"/>
        <dbReference type="ChEBI" id="CHEBI:59789"/>
        <dbReference type="ChEBI" id="CHEBI:65314"/>
        <dbReference type="ChEBI" id="CHEBI:74486"/>
        <dbReference type="EC" id="2.1.1.177"/>
    </reaction>
</comment>
<comment type="subcellular location">
    <subcellularLocation>
        <location evidence="1">Cytoplasm</location>
    </subcellularLocation>
</comment>
<comment type="similarity">
    <text evidence="1">Belongs to the RNA methyltransferase RlmH family.</text>
</comment>
<proteinExistence type="inferred from homology"/>
<organism>
    <name type="scientific">Methanocorpusculum labreanum (strain ATCC 43576 / DSM 4855 / Z)</name>
    <dbReference type="NCBI Taxonomy" id="410358"/>
    <lineage>
        <taxon>Archaea</taxon>
        <taxon>Methanobacteriati</taxon>
        <taxon>Methanobacteriota</taxon>
        <taxon>Stenosarchaea group</taxon>
        <taxon>Methanomicrobia</taxon>
        <taxon>Methanomicrobiales</taxon>
        <taxon>Methanocorpusculaceae</taxon>
        <taxon>Methanocorpusculum</taxon>
    </lineage>
</organism>
<feature type="chain" id="PRO_1000061805" description="Putative ribosomal RNA large subunit methyltransferase H">
    <location>
        <begin position="1"/>
        <end position="158"/>
    </location>
</feature>
<feature type="binding site" evidence="1">
    <location>
        <position position="76"/>
    </location>
    <ligand>
        <name>S-adenosyl-L-methionine</name>
        <dbReference type="ChEBI" id="CHEBI:59789"/>
    </ligand>
</feature>
<feature type="binding site" evidence="1">
    <location>
        <position position="107"/>
    </location>
    <ligand>
        <name>S-adenosyl-L-methionine</name>
        <dbReference type="ChEBI" id="CHEBI:59789"/>
    </ligand>
</feature>
<feature type="binding site" evidence="1">
    <location>
        <begin position="126"/>
        <end position="131"/>
    </location>
    <ligand>
        <name>S-adenosyl-L-methionine</name>
        <dbReference type="ChEBI" id="CHEBI:59789"/>
    </ligand>
</feature>
<dbReference type="EC" id="2.1.1.177" evidence="1"/>
<dbReference type="EMBL" id="CP000559">
    <property type="protein sequence ID" value="ABN06849.1"/>
    <property type="molecule type" value="Genomic_DNA"/>
</dbReference>
<dbReference type="RefSeq" id="WP_011833050.1">
    <property type="nucleotide sequence ID" value="NC_008942.1"/>
</dbReference>
<dbReference type="SMR" id="A2SR93"/>
<dbReference type="STRING" id="410358.Mlab_0677"/>
<dbReference type="GeneID" id="4794544"/>
<dbReference type="KEGG" id="mla:Mlab_0677"/>
<dbReference type="eggNOG" id="arCOG05111">
    <property type="taxonomic scope" value="Archaea"/>
</dbReference>
<dbReference type="HOGENOM" id="CLU_100552_0_0_2"/>
<dbReference type="OrthoDB" id="111266at2157"/>
<dbReference type="Proteomes" id="UP000000365">
    <property type="component" value="Chromosome"/>
</dbReference>
<dbReference type="GO" id="GO:0005737">
    <property type="term" value="C:cytoplasm"/>
    <property type="evidence" value="ECO:0007669"/>
    <property type="project" value="UniProtKB-SubCell"/>
</dbReference>
<dbReference type="GO" id="GO:0070038">
    <property type="term" value="F:rRNA (pseudouridine-N3-)-methyltransferase activity"/>
    <property type="evidence" value="ECO:0007669"/>
    <property type="project" value="UniProtKB-UniRule"/>
</dbReference>
<dbReference type="CDD" id="cd18081">
    <property type="entry name" value="RlmH-like"/>
    <property type="match status" value="1"/>
</dbReference>
<dbReference type="Gene3D" id="3.40.1280.10">
    <property type="match status" value="1"/>
</dbReference>
<dbReference type="HAMAP" id="MF_00658">
    <property type="entry name" value="23SrRNA_methyltr_H"/>
    <property type="match status" value="1"/>
</dbReference>
<dbReference type="InterPro" id="IPR029028">
    <property type="entry name" value="Alpha/beta_knot_MTases"/>
</dbReference>
<dbReference type="InterPro" id="IPR003742">
    <property type="entry name" value="RlmH-like"/>
</dbReference>
<dbReference type="InterPro" id="IPR029026">
    <property type="entry name" value="tRNA_m1G_MTases_N"/>
</dbReference>
<dbReference type="NCBIfam" id="NF000985">
    <property type="entry name" value="PRK00103.1-3"/>
    <property type="match status" value="1"/>
</dbReference>
<dbReference type="PANTHER" id="PTHR33603">
    <property type="entry name" value="METHYLTRANSFERASE"/>
    <property type="match status" value="1"/>
</dbReference>
<dbReference type="PANTHER" id="PTHR33603:SF1">
    <property type="entry name" value="RIBOSOMAL RNA LARGE SUBUNIT METHYLTRANSFERASE H"/>
    <property type="match status" value="1"/>
</dbReference>
<dbReference type="Pfam" id="PF02590">
    <property type="entry name" value="SPOUT_MTase"/>
    <property type="match status" value="1"/>
</dbReference>
<dbReference type="PIRSF" id="PIRSF004505">
    <property type="entry name" value="MT_bac"/>
    <property type="match status" value="1"/>
</dbReference>
<dbReference type="SUPFAM" id="SSF75217">
    <property type="entry name" value="alpha/beta knot"/>
    <property type="match status" value="1"/>
</dbReference>
<gene>
    <name evidence="1" type="primary">rlmH</name>
    <name type="ordered locus">Mlab_0677</name>
</gene>
<sequence>MQIQIVCVGKIKDAYISSGVVEFEKRLRPYGKIFITELAEVKIPDNASASDELRVKEREGELILANVKEGFFKIALDPNGMSLSSEEFSDVFRDAKLSGKNLCFIIGGPLGLSPKLLQSVEKKLSLSRMTFTHPMTRLILLEQVYRAFRILNGEPYHK</sequence>
<name>RLMH_METLZ</name>